<dbReference type="EMBL" id="AF041468">
    <property type="protein sequence ID" value="AAC35704.1"/>
    <property type="molecule type" value="Genomic_DNA"/>
</dbReference>
<dbReference type="RefSeq" id="NP_050770.1">
    <property type="nucleotide sequence ID" value="NC_000926.1"/>
</dbReference>
<dbReference type="SMR" id="O46895"/>
<dbReference type="GeneID" id="857078"/>
<dbReference type="HOGENOM" id="CLU_041575_5_2_1"/>
<dbReference type="OMA" id="SMFFMTE"/>
<dbReference type="GO" id="GO:0009507">
    <property type="term" value="C:chloroplast"/>
    <property type="evidence" value="ECO:0007669"/>
    <property type="project" value="UniProtKB-SubCell"/>
</dbReference>
<dbReference type="GO" id="GO:1990904">
    <property type="term" value="C:ribonucleoprotein complex"/>
    <property type="evidence" value="ECO:0007669"/>
    <property type="project" value="UniProtKB-KW"/>
</dbReference>
<dbReference type="GO" id="GO:0005840">
    <property type="term" value="C:ribosome"/>
    <property type="evidence" value="ECO:0007669"/>
    <property type="project" value="UniProtKB-KW"/>
</dbReference>
<dbReference type="GO" id="GO:0019843">
    <property type="term" value="F:rRNA binding"/>
    <property type="evidence" value="ECO:0007669"/>
    <property type="project" value="UniProtKB-UniRule"/>
</dbReference>
<dbReference type="GO" id="GO:0003735">
    <property type="term" value="F:structural constituent of ribosome"/>
    <property type="evidence" value="ECO:0007669"/>
    <property type="project" value="InterPro"/>
</dbReference>
<dbReference type="GO" id="GO:0006412">
    <property type="term" value="P:translation"/>
    <property type="evidence" value="ECO:0007669"/>
    <property type="project" value="UniProtKB-UniRule"/>
</dbReference>
<dbReference type="Gene3D" id="3.40.1370.10">
    <property type="match status" value="1"/>
</dbReference>
<dbReference type="HAMAP" id="MF_01328_B">
    <property type="entry name" value="Ribosomal_uL4_B"/>
    <property type="match status" value="1"/>
</dbReference>
<dbReference type="InterPro" id="IPR002136">
    <property type="entry name" value="Ribosomal_uL4"/>
</dbReference>
<dbReference type="InterPro" id="IPR013005">
    <property type="entry name" value="Ribosomal_uL4-like"/>
</dbReference>
<dbReference type="InterPro" id="IPR023574">
    <property type="entry name" value="Ribosomal_uL4_dom_sf"/>
</dbReference>
<dbReference type="NCBIfam" id="TIGR03953">
    <property type="entry name" value="rplD_bact"/>
    <property type="match status" value="1"/>
</dbReference>
<dbReference type="PANTHER" id="PTHR10746">
    <property type="entry name" value="50S RIBOSOMAL PROTEIN L4"/>
    <property type="match status" value="1"/>
</dbReference>
<dbReference type="PANTHER" id="PTHR10746:SF17">
    <property type="entry name" value="LARGE RIBOSOMAL SUBUNIT PROTEIN UL4C"/>
    <property type="match status" value="1"/>
</dbReference>
<dbReference type="Pfam" id="PF00573">
    <property type="entry name" value="Ribosomal_L4"/>
    <property type="match status" value="1"/>
</dbReference>
<dbReference type="SUPFAM" id="SSF52166">
    <property type="entry name" value="Ribosomal protein L4"/>
    <property type="match status" value="1"/>
</dbReference>
<reference key="1">
    <citation type="journal article" date="1997" name="Biochem. Mol. Biol. Int.">
        <title>The large ribosomal protein gene cluster of a cryptomonad plastid: gene organization, sequence and evolutionary implications.</title>
        <authorList>
            <person name="Wang S.L."/>
            <person name="Liu X.-Q."/>
            <person name="Douglas S.E."/>
        </authorList>
    </citation>
    <scope>NUCLEOTIDE SEQUENCE [GENOMIC DNA]</scope>
</reference>
<reference key="2">
    <citation type="journal article" date="1999" name="J. Mol. Evol.">
        <title>The plastid genome of the cryptophyte alga, Guillardia theta: complete sequence and conserved synteny groups confirm its common ancestry with red algae.</title>
        <authorList>
            <person name="Douglas S.E."/>
            <person name="Penny S.L."/>
        </authorList>
    </citation>
    <scope>NUCLEOTIDE SEQUENCE [LARGE SCALE GENOMIC DNA]</scope>
</reference>
<protein>
    <recommendedName>
        <fullName evidence="3">Large ribosomal subunit protein uL4c</fullName>
    </recommendedName>
    <alternativeName>
        <fullName>50S ribosomal protein L4, chloroplastic</fullName>
    </alternativeName>
</protein>
<geneLocation type="chloroplast"/>
<comment type="function">
    <text evidence="1">Probably binds the 23S rRNA.</text>
</comment>
<comment type="subunit">
    <text>Part of the 50S ribosomal subunit.</text>
</comment>
<comment type="subcellular location">
    <subcellularLocation>
        <location>Plastid</location>
        <location>Chloroplast</location>
    </subcellularLocation>
</comment>
<comment type="similarity">
    <text evidence="3">Belongs to the universal ribosomal protein uL4 family.</text>
</comment>
<feature type="chain" id="PRO_0000129324" description="Large ribosomal subunit protein uL4c">
    <location>
        <begin position="1"/>
        <end position="223"/>
    </location>
</feature>
<feature type="region of interest" description="Disordered" evidence="2">
    <location>
        <begin position="61"/>
        <end position="96"/>
    </location>
</feature>
<organism>
    <name type="scientific">Guillardia theta</name>
    <name type="common">Cryptophyte</name>
    <name type="synonym">Cryptomonas phi</name>
    <dbReference type="NCBI Taxonomy" id="55529"/>
    <lineage>
        <taxon>Eukaryota</taxon>
        <taxon>Cryptophyceae</taxon>
        <taxon>Pyrenomonadales</taxon>
        <taxon>Geminigeraceae</taxon>
        <taxon>Guillardia</taxon>
    </lineage>
</organism>
<evidence type="ECO:0000250" key="1"/>
<evidence type="ECO:0000256" key="2">
    <source>
        <dbReference type="SAM" id="MobiDB-lite"/>
    </source>
</evidence>
<evidence type="ECO:0000305" key="3"/>
<sequence>MGSNKIKNLVQYEIQDFVSLNKMDTKSHDSLNLNVSKKSRYLLHRVLTNQLINNRSGNACTKTRSEVEGGGKKPWKQKGTGNARAGSSNSPLWKGGGVTFGPKPRTFSNKTNKKERLLALTTALYLKSNNTKVINLDNLDFTNLKTRDLVIKCSNLIENYKKDQKILFVAEPTASGLWRYVKNISNVDLIYTTGLDLKKILQAHHIIFTCKALNDVKEVFNEQ</sequence>
<proteinExistence type="inferred from homology"/>
<name>RK4_GUITH</name>
<gene>
    <name type="primary">rpl4</name>
</gene>
<accession>O46895</accession>
<keyword id="KW-0150">Chloroplast</keyword>
<keyword id="KW-0934">Plastid</keyword>
<keyword id="KW-0687">Ribonucleoprotein</keyword>
<keyword id="KW-0689">Ribosomal protein</keyword>
<keyword id="KW-0694">RNA-binding</keyword>
<keyword id="KW-0699">rRNA-binding</keyword>